<name>ITBP2_MOUSE</name>
<evidence type="ECO:0000255" key="1"/>
<evidence type="ECO:0000255" key="2">
    <source>
        <dbReference type="PROSITE-ProRule" id="PRU00547"/>
    </source>
</evidence>
<evidence type="ECO:0000255" key="3">
    <source>
        <dbReference type="PROSITE-ProRule" id="PRU00734"/>
    </source>
</evidence>
<evidence type="ECO:0000256" key="4">
    <source>
        <dbReference type="SAM" id="MobiDB-lite"/>
    </source>
</evidence>
<evidence type="ECO:0000305" key="5"/>
<reference key="1">
    <citation type="journal article" date="1999" name="J. Biol. Chem.">
        <title>Melusin is a new muscle-specific interactor for beta(1) integrin cytoplasmic domain.</title>
        <authorList>
            <person name="Brancaccio M."/>
            <person name="Guazzone S."/>
            <person name="Menini N."/>
            <person name="Sibona E."/>
            <person name="Hirsch E."/>
            <person name="De Andrea M."/>
            <person name="Rocchi M."/>
            <person name="Altruda F."/>
            <person name="Tarone G."/>
            <person name="Silengo L."/>
        </authorList>
    </citation>
    <scope>NUCLEOTIDE SEQUENCE [MRNA]</scope>
    <source>
        <tissue>Skeletal muscle</tissue>
    </source>
</reference>
<reference key="2">
    <citation type="journal article" date="2005" name="Science">
        <title>The transcriptional landscape of the mammalian genome.</title>
        <authorList>
            <person name="Carninci P."/>
            <person name="Kasukawa T."/>
            <person name="Katayama S."/>
            <person name="Gough J."/>
            <person name="Frith M.C."/>
            <person name="Maeda N."/>
            <person name="Oyama R."/>
            <person name="Ravasi T."/>
            <person name="Lenhard B."/>
            <person name="Wells C."/>
            <person name="Kodzius R."/>
            <person name="Shimokawa K."/>
            <person name="Bajic V.B."/>
            <person name="Brenner S.E."/>
            <person name="Batalov S."/>
            <person name="Forrest A.R."/>
            <person name="Zavolan M."/>
            <person name="Davis M.J."/>
            <person name="Wilming L.G."/>
            <person name="Aidinis V."/>
            <person name="Allen J.E."/>
            <person name="Ambesi-Impiombato A."/>
            <person name="Apweiler R."/>
            <person name="Aturaliya R.N."/>
            <person name="Bailey T.L."/>
            <person name="Bansal M."/>
            <person name="Baxter L."/>
            <person name="Beisel K.W."/>
            <person name="Bersano T."/>
            <person name="Bono H."/>
            <person name="Chalk A.M."/>
            <person name="Chiu K.P."/>
            <person name="Choudhary V."/>
            <person name="Christoffels A."/>
            <person name="Clutterbuck D.R."/>
            <person name="Crowe M.L."/>
            <person name="Dalla E."/>
            <person name="Dalrymple B.P."/>
            <person name="de Bono B."/>
            <person name="Della Gatta G."/>
            <person name="di Bernardo D."/>
            <person name="Down T."/>
            <person name="Engstrom P."/>
            <person name="Fagiolini M."/>
            <person name="Faulkner G."/>
            <person name="Fletcher C.F."/>
            <person name="Fukushima T."/>
            <person name="Furuno M."/>
            <person name="Futaki S."/>
            <person name="Gariboldi M."/>
            <person name="Georgii-Hemming P."/>
            <person name="Gingeras T.R."/>
            <person name="Gojobori T."/>
            <person name="Green R.E."/>
            <person name="Gustincich S."/>
            <person name="Harbers M."/>
            <person name="Hayashi Y."/>
            <person name="Hensch T.K."/>
            <person name="Hirokawa N."/>
            <person name="Hill D."/>
            <person name="Huminiecki L."/>
            <person name="Iacono M."/>
            <person name="Ikeo K."/>
            <person name="Iwama A."/>
            <person name="Ishikawa T."/>
            <person name="Jakt M."/>
            <person name="Kanapin A."/>
            <person name="Katoh M."/>
            <person name="Kawasawa Y."/>
            <person name="Kelso J."/>
            <person name="Kitamura H."/>
            <person name="Kitano H."/>
            <person name="Kollias G."/>
            <person name="Krishnan S.P."/>
            <person name="Kruger A."/>
            <person name="Kummerfeld S.K."/>
            <person name="Kurochkin I.V."/>
            <person name="Lareau L.F."/>
            <person name="Lazarevic D."/>
            <person name="Lipovich L."/>
            <person name="Liu J."/>
            <person name="Liuni S."/>
            <person name="McWilliam S."/>
            <person name="Madan Babu M."/>
            <person name="Madera M."/>
            <person name="Marchionni L."/>
            <person name="Matsuda H."/>
            <person name="Matsuzawa S."/>
            <person name="Miki H."/>
            <person name="Mignone F."/>
            <person name="Miyake S."/>
            <person name="Morris K."/>
            <person name="Mottagui-Tabar S."/>
            <person name="Mulder N."/>
            <person name="Nakano N."/>
            <person name="Nakauchi H."/>
            <person name="Ng P."/>
            <person name="Nilsson R."/>
            <person name="Nishiguchi S."/>
            <person name="Nishikawa S."/>
            <person name="Nori F."/>
            <person name="Ohara O."/>
            <person name="Okazaki Y."/>
            <person name="Orlando V."/>
            <person name="Pang K.C."/>
            <person name="Pavan W.J."/>
            <person name="Pavesi G."/>
            <person name="Pesole G."/>
            <person name="Petrovsky N."/>
            <person name="Piazza S."/>
            <person name="Reed J."/>
            <person name="Reid J.F."/>
            <person name="Ring B.Z."/>
            <person name="Ringwald M."/>
            <person name="Rost B."/>
            <person name="Ruan Y."/>
            <person name="Salzberg S.L."/>
            <person name="Sandelin A."/>
            <person name="Schneider C."/>
            <person name="Schoenbach C."/>
            <person name="Sekiguchi K."/>
            <person name="Semple C.A."/>
            <person name="Seno S."/>
            <person name="Sessa L."/>
            <person name="Sheng Y."/>
            <person name="Shibata Y."/>
            <person name="Shimada H."/>
            <person name="Shimada K."/>
            <person name="Silva D."/>
            <person name="Sinclair B."/>
            <person name="Sperling S."/>
            <person name="Stupka E."/>
            <person name="Sugiura K."/>
            <person name="Sultana R."/>
            <person name="Takenaka Y."/>
            <person name="Taki K."/>
            <person name="Tammoja K."/>
            <person name="Tan S.L."/>
            <person name="Tang S."/>
            <person name="Taylor M.S."/>
            <person name="Tegner J."/>
            <person name="Teichmann S.A."/>
            <person name="Ueda H.R."/>
            <person name="van Nimwegen E."/>
            <person name="Verardo R."/>
            <person name="Wei C.L."/>
            <person name="Yagi K."/>
            <person name="Yamanishi H."/>
            <person name="Zabarovsky E."/>
            <person name="Zhu S."/>
            <person name="Zimmer A."/>
            <person name="Hide W."/>
            <person name="Bult C."/>
            <person name="Grimmond S.M."/>
            <person name="Teasdale R.D."/>
            <person name="Liu E.T."/>
            <person name="Brusic V."/>
            <person name="Quackenbush J."/>
            <person name="Wahlestedt C."/>
            <person name="Mattick J.S."/>
            <person name="Hume D.A."/>
            <person name="Kai C."/>
            <person name="Sasaki D."/>
            <person name="Tomaru Y."/>
            <person name="Fukuda S."/>
            <person name="Kanamori-Katayama M."/>
            <person name="Suzuki M."/>
            <person name="Aoki J."/>
            <person name="Arakawa T."/>
            <person name="Iida J."/>
            <person name="Imamura K."/>
            <person name="Itoh M."/>
            <person name="Kato T."/>
            <person name="Kawaji H."/>
            <person name="Kawagashira N."/>
            <person name="Kawashima T."/>
            <person name="Kojima M."/>
            <person name="Kondo S."/>
            <person name="Konno H."/>
            <person name="Nakano K."/>
            <person name="Ninomiya N."/>
            <person name="Nishio T."/>
            <person name="Okada M."/>
            <person name="Plessy C."/>
            <person name="Shibata K."/>
            <person name="Shiraki T."/>
            <person name="Suzuki S."/>
            <person name="Tagami M."/>
            <person name="Waki K."/>
            <person name="Watahiki A."/>
            <person name="Okamura-Oho Y."/>
            <person name="Suzuki H."/>
            <person name="Kawai J."/>
            <person name="Hayashizaki Y."/>
        </authorList>
    </citation>
    <scope>NUCLEOTIDE SEQUENCE [LARGE SCALE MRNA]</scope>
    <source>
        <strain>C57BL/6J</strain>
        <tissue>Embryo</tissue>
    </source>
</reference>
<reference key="3">
    <citation type="journal article" date="2004" name="Genome Res.">
        <title>The status, quality, and expansion of the NIH full-length cDNA project: the Mammalian Gene Collection (MGC).</title>
        <authorList>
            <consortium name="The MGC Project Team"/>
        </authorList>
    </citation>
    <scope>NUCLEOTIDE SEQUENCE [LARGE SCALE MRNA]</scope>
    <source>
        <strain>C57BL/6J</strain>
        <tissue>Mammary gland</tissue>
    </source>
</reference>
<reference key="4">
    <citation type="journal article" date="2010" name="Cell">
        <title>A tissue-specific atlas of mouse protein phosphorylation and expression.</title>
        <authorList>
            <person name="Huttlin E.L."/>
            <person name="Jedrychowski M.P."/>
            <person name="Elias J.E."/>
            <person name="Goswami T."/>
            <person name="Rad R."/>
            <person name="Beausoleil S.A."/>
            <person name="Villen J."/>
            <person name="Haas W."/>
            <person name="Sowa M.E."/>
            <person name="Gygi S.P."/>
        </authorList>
    </citation>
    <scope>IDENTIFICATION BY MASS SPECTROMETRY [LARGE SCALE ANALYSIS]</scope>
    <source>
        <tissue>Heart</tissue>
    </source>
</reference>
<sequence>MSLLCYNKGCGQHFDPNTNLPDSCRYHPGVPIFHDALKGWSCCRKRTVDFSEFLNIKGCTVGLHCAEKLPEVPPQPEGPATSSLQEQKPLNTIPKSAETLFRERPKSEMPPKLLPLLISQALGVALEQKELDQEPGAGLDNSLIWTGSSCQNPGCDAVYQGPESDATPCTYHPGAPRFHEGMKSWSCCGIQTLDFGAFLAQPGCRVGRHDWAKQLPASCRHDWHQTDSVVVLTVYGQIPLPAFNWVKASQTELHVHIVFDGNRVFQAQMKLWGVINVEQSSVSLMPSRVEISLVKADPGSWAQLEHPDSLAEKARAGVLLEMDEEESEDSDDDLSWTEEEDEEEEEAMGE</sequence>
<gene>
    <name type="primary">Itgb1bp2</name>
</gene>
<organism>
    <name type="scientific">Mus musculus</name>
    <name type="common">Mouse</name>
    <dbReference type="NCBI Taxonomy" id="10090"/>
    <lineage>
        <taxon>Eukaryota</taxon>
        <taxon>Metazoa</taxon>
        <taxon>Chordata</taxon>
        <taxon>Craniata</taxon>
        <taxon>Vertebrata</taxon>
        <taxon>Euteleostomi</taxon>
        <taxon>Mammalia</taxon>
        <taxon>Eutheria</taxon>
        <taxon>Euarchontoglires</taxon>
        <taxon>Glires</taxon>
        <taxon>Rodentia</taxon>
        <taxon>Myomorpha</taxon>
        <taxon>Muroidea</taxon>
        <taxon>Muridae</taxon>
        <taxon>Murinae</taxon>
        <taxon>Mus</taxon>
        <taxon>Mus</taxon>
    </lineage>
</organism>
<keyword id="KW-0479">Metal-binding</keyword>
<keyword id="KW-1185">Reference proteome</keyword>
<keyword id="KW-0677">Repeat</keyword>
<keyword id="KW-0729">SH3-binding</keyword>
<keyword id="KW-0862">Zinc</keyword>
<proteinExistence type="evidence at protein level"/>
<feature type="chain" id="PRO_0000084268" description="Integrin beta-1-binding protein 2">
    <location>
        <begin position="1"/>
        <end position="350"/>
    </location>
</feature>
<feature type="domain" description="CHORD 1" evidence="3">
    <location>
        <begin position="5"/>
        <end position="64"/>
    </location>
</feature>
<feature type="domain" description="CHORD 2" evidence="3">
    <location>
        <begin position="150"/>
        <end position="209"/>
    </location>
</feature>
<feature type="domain" description="CS" evidence="2">
    <location>
        <begin position="216"/>
        <end position="305"/>
    </location>
</feature>
<feature type="region of interest" description="Disordered" evidence="4">
    <location>
        <begin position="72"/>
        <end position="92"/>
    </location>
</feature>
<feature type="region of interest" description="Disordered" evidence="4">
    <location>
        <begin position="317"/>
        <end position="350"/>
    </location>
</feature>
<feature type="short sequence motif" description="SH3-binding" evidence="1">
    <location>
        <begin position="28"/>
        <end position="31"/>
    </location>
</feature>
<feature type="short sequence motif" description="SH3-binding" evidence="1">
    <location>
        <begin position="70"/>
        <end position="79"/>
    </location>
</feature>
<feature type="short sequence motif" description="SH2-binding" evidence="1">
    <location>
        <begin position="159"/>
        <end position="162"/>
    </location>
</feature>
<feature type="short sequence motif" description="SH3-binding" evidence="1">
    <location>
        <begin position="173"/>
        <end position="176"/>
    </location>
</feature>
<feature type="short sequence motif" description="SH2-binding" evidence="1">
    <location>
        <begin position="235"/>
        <end position="238"/>
    </location>
</feature>
<feature type="compositionally biased region" description="Polar residues" evidence="4">
    <location>
        <begin position="80"/>
        <end position="92"/>
    </location>
</feature>
<feature type="compositionally biased region" description="Acidic residues" evidence="4">
    <location>
        <begin position="321"/>
        <end position="350"/>
    </location>
</feature>
<feature type="binding site" evidence="3">
    <location>
        <position position="5"/>
    </location>
    <ligand>
        <name>Zn(2+)</name>
        <dbReference type="ChEBI" id="CHEBI:29105"/>
        <label>1</label>
    </ligand>
</feature>
<feature type="binding site" evidence="3">
    <location>
        <position position="10"/>
    </location>
    <ligand>
        <name>Zn(2+)</name>
        <dbReference type="ChEBI" id="CHEBI:29105"/>
        <label>1</label>
    </ligand>
</feature>
<feature type="binding site" evidence="3">
    <location>
        <position position="24"/>
    </location>
    <ligand>
        <name>Zn(2+)</name>
        <dbReference type="ChEBI" id="CHEBI:29105"/>
        <label>1</label>
    </ligand>
</feature>
<feature type="binding site" evidence="3">
    <location>
        <position position="27"/>
    </location>
    <ligand>
        <name>Zn(2+)</name>
        <dbReference type="ChEBI" id="CHEBI:29105"/>
        <label>2</label>
    </ligand>
</feature>
<feature type="binding site" evidence="3">
    <location>
        <position position="42"/>
    </location>
    <ligand>
        <name>Zn(2+)</name>
        <dbReference type="ChEBI" id="CHEBI:29105"/>
        <label>2</label>
    </ligand>
</feature>
<feature type="binding site" evidence="3">
    <location>
        <position position="43"/>
    </location>
    <ligand>
        <name>Zn(2+)</name>
        <dbReference type="ChEBI" id="CHEBI:29105"/>
        <label>2</label>
    </ligand>
</feature>
<feature type="binding site" evidence="3">
    <location>
        <position position="59"/>
    </location>
    <ligand>
        <name>Zn(2+)</name>
        <dbReference type="ChEBI" id="CHEBI:29105"/>
        <label>2</label>
    </ligand>
</feature>
<feature type="binding site" evidence="3">
    <location>
        <position position="64"/>
    </location>
    <ligand>
        <name>Zn(2+)</name>
        <dbReference type="ChEBI" id="CHEBI:29105"/>
        <label>1</label>
    </ligand>
</feature>
<feature type="binding site" evidence="3">
    <location>
        <position position="150"/>
    </location>
    <ligand>
        <name>Zn(2+)</name>
        <dbReference type="ChEBI" id="CHEBI:29105"/>
        <label>3</label>
    </ligand>
</feature>
<feature type="binding site" evidence="3">
    <location>
        <position position="155"/>
    </location>
    <ligand>
        <name>Zn(2+)</name>
        <dbReference type="ChEBI" id="CHEBI:29105"/>
        <label>3</label>
    </ligand>
</feature>
<feature type="binding site" evidence="3">
    <location>
        <position position="169"/>
    </location>
    <ligand>
        <name>Zn(2+)</name>
        <dbReference type="ChEBI" id="CHEBI:29105"/>
        <label>3</label>
    </ligand>
</feature>
<feature type="binding site" evidence="3">
    <location>
        <position position="172"/>
    </location>
    <ligand>
        <name>Zn(2+)</name>
        <dbReference type="ChEBI" id="CHEBI:29105"/>
        <label>4</label>
    </ligand>
</feature>
<feature type="binding site" evidence="3">
    <location>
        <position position="187"/>
    </location>
    <ligand>
        <name>Zn(2+)</name>
        <dbReference type="ChEBI" id="CHEBI:29105"/>
        <label>4</label>
    </ligand>
</feature>
<feature type="binding site" evidence="3">
    <location>
        <position position="188"/>
    </location>
    <ligand>
        <name>Zn(2+)</name>
        <dbReference type="ChEBI" id="CHEBI:29105"/>
        <label>4</label>
    </ligand>
</feature>
<feature type="binding site" evidence="3">
    <location>
        <position position="204"/>
    </location>
    <ligand>
        <name>Zn(2+)</name>
        <dbReference type="ChEBI" id="CHEBI:29105"/>
        <label>4</label>
    </ligand>
</feature>
<feature type="binding site" evidence="3">
    <location>
        <position position="209"/>
    </location>
    <ligand>
        <name>Zn(2+)</name>
        <dbReference type="ChEBI" id="CHEBI:29105"/>
        <label>3</label>
    </ligand>
</feature>
<feature type="sequence conflict" description="In Ref. 2; BAB23069." evidence="5" ref="2">
    <original>S</original>
    <variation>F</variation>
    <location>
        <position position="148"/>
    </location>
</feature>
<feature type="sequence conflict" description="In Ref. 2; BAB23069." evidence="5" ref="2">
    <original>H</original>
    <variation>Y</variation>
    <location>
        <position position="172"/>
    </location>
</feature>
<feature type="sequence conflict" description="In Ref. 2; BAB23069." evidence="5" ref="2">
    <original>MKSWSCCG</original>
    <variation>KKFLKLLC</variation>
    <location>
        <begin position="182"/>
        <end position="189"/>
    </location>
</feature>
<accession>Q9R000</accession>
<accession>Q9D161</accession>
<dbReference type="EMBL" id="AF140691">
    <property type="protein sequence ID" value="AAF01677.1"/>
    <property type="molecule type" value="mRNA"/>
</dbReference>
<dbReference type="EMBL" id="AK003906">
    <property type="protein sequence ID" value="BAB23069.1"/>
    <property type="molecule type" value="mRNA"/>
</dbReference>
<dbReference type="EMBL" id="BC030035">
    <property type="protein sequence ID" value="AAH30035.1"/>
    <property type="molecule type" value="mRNA"/>
</dbReference>
<dbReference type="CCDS" id="CCDS41079.1"/>
<dbReference type="RefSeq" id="NP_038740.1">
    <property type="nucleotide sequence ID" value="NM_013712.3"/>
</dbReference>
<dbReference type="SMR" id="Q9R000"/>
<dbReference type="BioGRID" id="205012">
    <property type="interactions" value="7"/>
</dbReference>
<dbReference type="FunCoup" id="Q9R000">
    <property type="interactions" value="15"/>
</dbReference>
<dbReference type="IntAct" id="Q9R000">
    <property type="interactions" value="2"/>
</dbReference>
<dbReference type="MINT" id="Q9R000"/>
<dbReference type="STRING" id="10090.ENSMUSP00000033674"/>
<dbReference type="iPTMnet" id="Q9R000"/>
<dbReference type="PhosphoSitePlus" id="Q9R000"/>
<dbReference type="PaxDb" id="10090-ENSMUSP00000033674"/>
<dbReference type="ProteomicsDB" id="301694"/>
<dbReference type="Antibodypedia" id="13542">
    <property type="antibodies" value="211 antibodies from 28 providers"/>
</dbReference>
<dbReference type="Ensembl" id="ENSMUST00000033674.6">
    <property type="protein sequence ID" value="ENSMUSP00000033674.6"/>
    <property type="gene ID" value="ENSMUSG00000031312.6"/>
</dbReference>
<dbReference type="GeneID" id="26549"/>
<dbReference type="KEGG" id="mmu:26549"/>
<dbReference type="UCSC" id="uc009txu.1">
    <property type="organism name" value="mouse"/>
</dbReference>
<dbReference type="AGR" id="MGI:1353420"/>
<dbReference type="CTD" id="26548"/>
<dbReference type="MGI" id="MGI:1353420">
    <property type="gene designation" value="Itgb1bp2"/>
</dbReference>
<dbReference type="VEuPathDB" id="HostDB:ENSMUSG00000031312"/>
<dbReference type="eggNOG" id="KOG1667">
    <property type="taxonomic scope" value="Eukaryota"/>
</dbReference>
<dbReference type="GeneTree" id="ENSGT00940000159429"/>
<dbReference type="HOGENOM" id="CLU_040079_0_0_1"/>
<dbReference type="InParanoid" id="Q9R000"/>
<dbReference type="OMA" id="CCQKRTV"/>
<dbReference type="OrthoDB" id="10261079at2759"/>
<dbReference type="PhylomeDB" id="Q9R000"/>
<dbReference type="TreeFam" id="TF105394"/>
<dbReference type="BioGRID-ORCS" id="26549">
    <property type="hits" value="4 hits in 80 CRISPR screens"/>
</dbReference>
<dbReference type="PRO" id="PR:Q9R000"/>
<dbReference type="Proteomes" id="UP000000589">
    <property type="component" value="Chromosome X"/>
</dbReference>
<dbReference type="RNAct" id="Q9R000">
    <property type="molecule type" value="protein"/>
</dbReference>
<dbReference type="Bgee" id="ENSMUSG00000031312">
    <property type="expression patterns" value="Expressed in interventricular septum and 109 other cell types or tissues"/>
</dbReference>
<dbReference type="GO" id="GO:0030018">
    <property type="term" value="C:Z disc"/>
    <property type="evidence" value="ECO:0000314"/>
    <property type="project" value="MGI"/>
</dbReference>
<dbReference type="GO" id="GO:0005509">
    <property type="term" value="F:calcium ion binding"/>
    <property type="evidence" value="ECO:0000314"/>
    <property type="project" value="MGI"/>
</dbReference>
<dbReference type="GO" id="GO:0005178">
    <property type="term" value="F:integrin binding"/>
    <property type="evidence" value="ECO:0007669"/>
    <property type="project" value="Ensembl"/>
</dbReference>
<dbReference type="GO" id="GO:0017124">
    <property type="term" value="F:SH3 domain binding"/>
    <property type="evidence" value="ECO:0007669"/>
    <property type="project" value="UniProtKB-KW"/>
</dbReference>
<dbReference type="GO" id="GO:0008270">
    <property type="term" value="F:zinc ion binding"/>
    <property type="evidence" value="ECO:0000314"/>
    <property type="project" value="MGI"/>
</dbReference>
<dbReference type="CDD" id="cd06488">
    <property type="entry name" value="p23_melusin_like"/>
    <property type="match status" value="1"/>
</dbReference>
<dbReference type="FunFam" id="4.10.1130.20:FF:000001">
    <property type="entry name" value="Cysteine and histidine-rich domain-containing protein 1"/>
    <property type="match status" value="1"/>
</dbReference>
<dbReference type="FunFam" id="2.60.40.790:FF:000027">
    <property type="entry name" value="integrin beta-1-binding protein 2 isoform X1"/>
    <property type="match status" value="1"/>
</dbReference>
<dbReference type="FunFam" id="4.10.1130.20:FF:000004">
    <property type="entry name" value="integrin beta-1-binding protein 2 isoform X1"/>
    <property type="match status" value="1"/>
</dbReference>
<dbReference type="Gene3D" id="2.60.40.790">
    <property type="match status" value="1"/>
</dbReference>
<dbReference type="Gene3D" id="4.10.1130.20">
    <property type="match status" value="2"/>
</dbReference>
<dbReference type="InterPro" id="IPR007051">
    <property type="entry name" value="CHORD_dom"/>
</dbReference>
<dbReference type="InterPro" id="IPR039790">
    <property type="entry name" value="CHRD1"/>
</dbReference>
<dbReference type="InterPro" id="IPR007052">
    <property type="entry name" value="CS_dom"/>
</dbReference>
<dbReference type="InterPro" id="IPR008978">
    <property type="entry name" value="HSP20-like_chaperone"/>
</dbReference>
<dbReference type="PANTHER" id="PTHR46983">
    <property type="entry name" value="CYSTEINE AND HISTIDINE-RICH DOMAIN-CONTAINING PROTEIN 1"/>
    <property type="match status" value="1"/>
</dbReference>
<dbReference type="PANTHER" id="PTHR46983:SF2">
    <property type="entry name" value="INTEGRIN SUBUNIT BETA 1 BINDING PROTEIN 2"/>
    <property type="match status" value="1"/>
</dbReference>
<dbReference type="Pfam" id="PF04968">
    <property type="entry name" value="CHORD"/>
    <property type="match status" value="2"/>
</dbReference>
<dbReference type="Pfam" id="PF04969">
    <property type="entry name" value="CS"/>
    <property type="match status" value="1"/>
</dbReference>
<dbReference type="SUPFAM" id="SSF49764">
    <property type="entry name" value="HSP20-like chaperones"/>
    <property type="match status" value="1"/>
</dbReference>
<dbReference type="PROSITE" id="PS51401">
    <property type="entry name" value="CHORD"/>
    <property type="match status" value="2"/>
</dbReference>
<dbReference type="PROSITE" id="PS51203">
    <property type="entry name" value="CS"/>
    <property type="match status" value="1"/>
</dbReference>
<comment type="function">
    <text>May play a role during maturation and/or organization of muscles cells.</text>
</comment>
<comment type="subunit">
    <text>Interacts with beta-1 integrin subunit. This interaction is regulated by divalent cations, and it occurs only in absence of calcium.</text>
</comment>
<comment type="interaction">
    <interactant intactId="EBI-7922331">
        <id>Q9R000</id>
    </interactant>
    <interactant intactId="EBI-7922565">
        <id>Q9CS74</id>
        <label>Ecd</label>
    </interactant>
    <organismsDiffer>false</organismsDiffer>
    <experiments>2</experiments>
</comment>
<comment type="interaction">
    <interactant intactId="EBI-7922331">
        <id>Q9R000</id>
    </interactant>
    <interactant intactId="EBI-78930">
        <id>P07901</id>
        <label>Hsp90aa1</label>
    </interactant>
    <organismsDiffer>false</organismsDiffer>
    <experiments>5</experiments>
</comment>
<comment type="tissue specificity">
    <text>Expressed in skeletal and cardiac muscles but not in other tissues. Is localized in rows flanking the Z line containing alpha-actinin.</text>
</comment>
<comment type="developmental stage">
    <text>Detectable in embryo limbs at day 15, reached a maximum in newborn, and declined in adult limb muscles. During heart development level remains steady from embryonic day 15 to adult stage.</text>
</comment>
<comment type="induction">
    <text>During muscle regeneration.</text>
</comment>
<comment type="domain">
    <text>The tail domain binds to the cytoplasmic domain of both integrin beta-1a and beta-1d isoforms. The presence of Ca(2+) ions does not prevent binding of a fragment consisting of the second cysteine rich repeat and the tail domain but prevents the binding of the full-length protein.</text>
</comment>
<protein>
    <recommendedName>
        <fullName>Integrin beta-1-binding protein 2</fullName>
    </recommendedName>
    <alternativeName>
        <fullName>Melusin</fullName>
    </alternativeName>
</protein>